<keyword id="KW-0067">ATP-binding</keyword>
<keyword id="KW-0963">Cytoplasm</keyword>
<keyword id="KW-0418">Kinase</keyword>
<keyword id="KW-0547">Nucleotide-binding</keyword>
<keyword id="KW-0808">Transferase</keyword>
<sequence length="220" mass="24534">MSDGTAGSYSGVERRGLMFVLSSPSGAGKTTLSRMLVEQMPGLQMSVSATTRPMRPGEVDGRDYYFVDRPKFDEMVGAGEFLEWANVFDNRYGTPRAPVEAALAVGRDVLFDIDWQGTQQLRSRAGSDVVSVFILPPSVQALEHRLHTRAQDSHEVIRGRMKKAGDEMSHFDAYDYIVVNDNIGVAFESVRSILRAEQLKRERQVGLDAFVRGMRQQLEG</sequence>
<comment type="function">
    <text evidence="1">Essential for recycling GMP and indirectly, cGMP.</text>
</comment>
<comment type="catalytic activity">
    <reaction evidence="1">
        <text>GMP + ATP = GDP + ADP</text>
        <dbReference type="Rhea" id="RHEA:20780"/>
        <dbReference type="ChEBI" id="CHEBI:30616"/>
        <dbReference type="ChEBI" id="CHEBI:58115"/>
        <dbReference type="ChEBI" id="CHEBI:58189"/>
        <dbReference type="ChEBI" id="CHEBI:456216"/>
        <dbReference type="EC" id="2.7.4.8"/>
    </reaction>
</comment>
<comment type="subcellular location">
    <subcellularLocation>
        <location evidence="1">Cytoplasm</location>
    </subcellularLocation>
</comment>
<comment type="similarity">
    <text evidence="1">Belongs to the guanylate kinase family.</text>
</comment>
<dbReference type="EC" id="2.7.4.8" evidence="1"/>
<dbReference type="EMBL" id="BX572602">
    <property type="protein sequence ID" value="CAE28510.1"/>
    <property type="molecule type" value="Genomic_DNA"/>
</dbReference>
<dbReference type="RefSeq" id="WP_011158615.1">
    <property type="nucleotide sequence ID" value="NZ_CP116810.1"/>
</dbReference>
<dbReference type="SMR" id="P60556"/>
<dbReference type="STRING" id="258594.RPA3069"/>
<dbReference type="GeneID" id="66894151"/>
<dbReference type="eggNOG" id="COG0194">
    <property type="taxonomic scope" value="Bacteria"/>
</dbReference>
<dbReference type="HOGENOM" id="CLU_001715_1_0_5"/>
<dbReference type="PhylomeDB" id="P60556"/>
<dbReference type="GO" id="GO:0005829">
    <property type="term" value="C:cytosol"/>
    <property type="evidence" value="ECO:0007669"/>
    <property type="project" value="TreeGrafter"/>
</dbReference>
<dbReference type="GO" id="GO:0005524">
    <property type="term" value="F:ATP binding"/>
    <property type="evidence" value="ECO:0007669"/>
    <property type="project" value="UniProtKB-UniRule"/>
</dbReference>
<dbReference type="GO" id="GO:0004385">
    <property type="term" value="F:guanylate kinase activity"/>
    <property type="evidence" value="ECO:0007669"/>
    <property type="project" value="UniProtKB-UniRule"/>
</dbReference>
<dbReference type="CDD" id="cd00071">
    <property type="entry name" value="GMPK"/>
    <property type="match status" value="1"/>
</dbReference>
<dbReference type="FunFam" id="3.30.63.10:FF:000002">
    <property type="entry name" value="Guanylate kinase 1"/>
    <property type="match status" value="1"/>
</dbReference>
<dbReference type="Gene3D" id="3.30.63.10">
    <property type="entry name" value="Guanylate Kinase phosphate binding domain"/>
    <property type="match status" value="1"/>
</dbReference>
<dbReference type="Gene3D" id="3.40.50.300">
    <property type="entry name" value="P-loop containing nucleotide triphosphate hydrolases"/>
    <property type="match status" value="1"/>
</dbReference>
<dbReference type="HAMAP" id="MF_00328">
    <property type="entry name" value="Guanylate_kinase"/>
    <property type="match status" value="1"/>
</dbReference>
<dbReference type="InterPro" id="IPR008145">
    <property type="entry name" value="GK/Ca_channel_bsu"/>
</dbReference>
<dbReference type="InterPro" id="IPR008144">
    <property type="entry name" value="Guanylate_kin-like_dom"/>
</dbReference>
<dbReference type="InterPro" id="IPR017665">
    <property type="entry name" value="Guanylate_kinase"/>
</dbReference>
<dbReference type="InterPro" id="IPR020590">
    <property type="entry name" value="Guanylate_kinase_CS"/>
</dbReference>
<dbReference type="InterPro" id="IPR027417">
    <property type="entry name" value="P-loop_NTPase"/>
</dbReference>
<dbReference type="NCBIfam" id="TIGR03263">
    <property type="entry name" value="guanyl_kin"/>
    <property type="match status" value="1"/>
</dbReference>
<dbReference type="PANTHER" id="PTHR23117:SF13">
    <property type="entry name" value="GUANYLATE KINASE"/>
    <property type="match status" value="1"/>
</dbReference>
<dbReference type="PANTHER" id="PTHR23117">
    <property type="entry name" value="GUANYLATE KINASE-RELATED"/>
    <property type="match status" value="1"/>
</dbReference>
<dbReference type="Pfam" id="PF00625">
    <property type="entry name" value="Guanylate_kin"/>
    <property type="match status" value="1"/>
</dbReference>
<dbReference type="SMART" id="SM00072">
    <property type="entry name" value="GuKc"/>
    <property type="match status" value="1"/>
</dbReference>
<dbReference type="SUPFAM" id="SSF52540">
    <property type="entry name" value="P-loop containing nucleoside triphosphate hydrolases"/>
    <property type="match status" value="1"/>
</dbReference>
<dbReference type="PROSITE" id="PS00856">
    <property type="entry name" value="GUANYLATE_KINASE_1"/>
    <property type="match status" value="1"/>
</dbReference>
<dbReference type="PROSITE" id="PS50052">
    <property type="entry name" value="GUANYLATE_KINASE_2"/>
    <property type="match status" value="1"/>
</dbReference>
<protein>
    <recommendedName>
        <fullName evidence="1">Guanylate kinase</fullName>
        <ecNumber evidence="1">2.7.4.8</ecNumber>
    </recommendedName>
    <alternativeName>
        <fullName evidence="1">GMP kinase</fullName>
    </alternativeName>
</protein>
<proteinExistence type="inferred from homology"/>
<name>KGUA_RHOPA</name>
<organism>
    <name type="scientific">Rhodopseudomonas palustris (strain ATCC BAA-98 / CGA009)</name>
    <dbReference type="NCBI Taxonomy" id="258594"/>
    <lineage>
        <taxon>Bacteria</taxon>
        <taxon>Pseudomonadati</taxon>
        <taxon>Pseudomonadota</taxon>
        <taxon>Alphaproteobacteria</taxon>
        <taxon>Hyphomicrobiales</taxon>
        <taxon>Nitrobacteraceae</taxon>
        <taxon>Rhodopseudomonas</taxon>
    </lineage>
</organism>
<accession>P60556</accession>
<feature type="chain" id="PRO_0000170594" description="Guanylate kinase">
    <location>
        <begin position="1"/>
        <end position="220"/>
    </location>
</feature>
<feature type="domain" description="Guanylate kinase-like" evidence="1">
    <location>
        <begin position="16"/>
        <end position="195"/>
    </location>
</feature>
<feature type="binding site" evidence="1">
    <location>
        <begin position="23"/>
        <end position="30"/>
    </location>
    <ligand>
        <name>ATP</name>
        <dbReference type="ChEBI" id="CHEBI:30616"/>
    </ligand>
</feature>
<reference key="1">
    <citation type="journal article" date="2004" name="Nat. Biotechnol.">
        <title>Complete genome sequence of the metabolically versatile photosynthetic bacterium Rhodopseudomonas palustris.</title>
        <authorList>
            <person name="Larimer F.W."/>
            <person name="Chain P."/>
            <person name="Hauser L."/>
            <person name="Lamerdin J.E."/>
            <person name="Malfatti S."/>
            <person name="Do L."/>
            <person name="Land M.L."/>
            <person name="Pelletier D.A."/>
            <person name="Beatty J.T."/>
            <person name="Lang A.S."/>
            <person name="Tabita F.R."/>
            <person name="Gibson J.L."/>
            <person name="Hanson T.E."/>
            <person name="Bobst C."/>
            <person name="Torres y Torres J.L."/>
            <person name="Peres C."/>
            <person name="Harrison F.H."/>
            <person name="Gibson J."/>
            <person name="Harwood C.S."/>
        </authorList>
    </citation>
    <scope>NUCLEOTIDE SEQUENCE [LARGE SCALE GENOMIC DNA]</scope>
    <source>
        <strain>ATCC BAA-98 / CGA009</strain>
    </source>
</reference>
<evidence type="ECO:0000255" key="1">
    <source>
        <dbReference type="HAMAP-Rule" id="MF_00328"/>
    </source>
</evidence>
<gene>
    <name evidence="1" type="primary">gmk</name>
    <name type="ordered locus">RPA3069</name>
</gene>